<comment type="function">
    <text evidence="1">DNA ligase that catalyzes the formation of phosphodiester linkages between 5'-phosphoryl and 3'-hydroxyl groups in double-stranded DNA using NAD as a coenzyme and as the energy source for the reaction. It is essential for DNA replication and repair of damaged DNA.</text>
</comment>
<comment type="catalytic activity">
    <reaction evidence="1">
        <text>NAD(+) + (deoxyribonucleotide)n-3'-hydroxyl + 5'-phospho-(deoxyribonucleotide)m = (deoxyribonucleotide)n+m + AMP + beta-nicotinamide D-nucleotide.</text>
        <dbReference type="EC" id="6.5.1.2"/>
    </reaction>
</comment>
<comment type="cofactor">
    <cofactor evidence="1">
        <name>Mg(2+)</name>
        <dbReference type="ChEBI" id="CHEBI:18420"/>
    </cofactor>
    <cofactor evidence="1">
        <name>Mn(2+)</name>
        <dbReference type="ChEBI" id="CHEBI:29035"/>
    </cofactor>
</comment>
<comment type="similarity">
    <text evidence="1">Belongs to the NAD-dependent DNA ligase family. LigA subfamily.</text>
</comment>
<evidence type="ECO:0000255" key="1">
    <source>
        <dbReference type="HAMAP-Rule" id="MF_01588"/>
    </source>
</evidence>
<protein>
    <recommendedName>
        <fullName evidence="1">DNA ligase</fullName>
        <ecNumber evidence="1">6.5.1.2</ecNumber>
    </recommendedName>
    <alternativeName>
        <fullName evidence="1">Polydeoxyribonucleotide synthase [NAD(+)]</fullName>
    </alternativeName>
</protein>
<accession>A3QFJ5</accession>
<sequence length="669" mass="72969">MQAIQDEIKQLTDELNQHNYRYYVDDAPSIPDAEYDRLMRRLQELEAEHPELALADSPTQRVGGEALSKFNQVTHLKPMLSLDNVFSEEEFNAFYKRVGDKLPDTPAFCCEPKLDGLAVSILYRDGVFERAATRGDGTVGEDITENVRTIKSVPLRLRGSGFPPLLEVRGEVFMPKAAFEAVNDKARAKGEKLFVNPRNAAAGSLRQLDSKITASRSLAFYAYALGVVEPETWPLAASHFEQLVQLKEWGCPVSSEVKVCADIPSVLAYYQDILTRRSELAYEIDGVVLKVNDIAQQQTLGFVAKAPRWATAYKFPAQEEITQLEGVDFQVGRTGAVTPVARLQPVFVGGVTVSNATLHNADEIARLGVMIGDSVIIRRAGDVIPQVVAVVPEKRPSDAQAIQFPPQCPVCGSDVERVEGEAVARCTGGLVCEAQRKEAIKHFASRKALDIDGMGDKVVEQLIDKELVASPADLFKLTASAITMLDRMGMKSATNLVNALEAAKQTTFARFLYSLGIREVGEATAANLANYFKTLEHLKQADAETFMKVDDVGVIVAQHLVHFFEQPHNLEVIDGLLQAGVHWPDIEEVAEEALSLKGQTWVLTGTLTQLNRNDAKAKLQALGAKVAGSVSKNTDCLVAGEAAGSKLTKAQELGVKVIDEAELLAILGS</sequence>
<organism>
    <name type="scientific">Shewanella loihica (strain ATCC BAA-1088 / PV-4)</name>
    <dbReference type="NCBI Taxonomy" id="323850"/>
    <lineage>
        <taxon>Bacteria</taxon>
        <taxon>Pseudomonadati</taxon>
        <taxon>Pseudomonadota</taxon>
        <taxon>Gammaproteobacteria</taxon>
        <taxon>Alteromonadales</taxon>
        <taxon>Shewanellaceae</taxon>
        <taxon>Shewanella</taxon>
    </lineage>
</organism>
<name>DNLJ_SHELP</name>
<gene>
    <name evidence="1" type="primary">ligA</name>
    <name type="ordered locus">Shew_2377</name>
</gene>
<feature type="chain" id="PRO_0000313427" description="DNA ligase">
    <location>
        <begin position="1"/>
        <end position="669"/>
    </location>
</feature>
<feature type="domain" description="BRCT" evidence="1">
    <location>
        <begin position="591"/>
        <end position="669"/>
    </location>
</feature>
<feature type="active site" description="N6-AMP-lysine intermediate" evidence="1">
    <location>
        <position position="113"/>
    </location>
</feature>
<feature type="binding site" evidence="1">
    <location>
        <begin position="32"/>
        <end position="36"/>
    </location>
    <ligand>
        <name>NAD(+)</name>
        <dbReference type="ChEBI" id="CHEBI:57540"/>
    </ligand>
</feature>
<feature type="binding site" evidence="1">
    <location>
        <begin position="81"/>
        <end position="82"/>
    </location>
    <ligand>
        <name>NAD(+)</name>
        <dbReference type="ChEBI" id="CHEBI:57540"/>
    </ligand>
</feature>
<feature type="binding site" evidence="1">
    <location>
        <position position="111"/>
    </location>
    <ligand>
        <name>NAD(+)</name>
        <dbReference type="ChEBI" id="CHEBI:57540"/>
    </ligand>
</feature>
<feature type="binding site" evidence="1">
    <location>
        <position position="134"/>
    </location>
    <ligand>
        <name>NAD(+)</name>
        <dbReference type="ChEBI" id="CHEBI:57540"/>
    </ligand>
</feature>
<feature type="binding site" evidence="1">
    <location>
        <position position="171"/>
    </location>
    <ligand>
        <name>NAD(+)</name>
        <dbReference type="ChEBI" id="CHEBI:57540"/>
    </ligand>
</feature>
<feature type="binding site" evidence="1">
    <location>
        <position position="290"/>
    </location>
    <ligand>
        <name>NAD(+)</name>
        <dbReference type="ChEBI" id="CHEBI:57540"/>
    </ligand>
</feature>
<feature type="binding site" evidence="1">
    <location>
        <position position="314"/>
    </location>
    <ligand>
        <name>NAD(+)</name>
        <dbReference type="ChEBI" id="CHEBI:57540"/>
    </ligand>
</feature>
<feature type="binding site" evidence="1">
    <location>
        <position position="408"/>
    </location>
    <ligand>
        <name>Zn(2+)</name>
        <dbReference type="ChEBI" id="CHEBI:29105"/>
    </ligand>
</feature>
<feature type="binding site" evidence="1">
    <location>
        <position position="411"/>
    </location>
    <ligand>
        <name>Zn(2+)</name>
        <dbReference type="ChEBI" id="CHEBI:29105"/>
    </ligand>
</feature>
<feature type="binding site" evidence="1">
    <location>
        <position position="426"/>
    </location>
    <ligand>
        <name>Zn(2+)</name>
        <dbReference type="ChEBI" id="CHEBI:29105"/>
    </ligand>
</feature>
<feature type="binding site" evidence="1">
    <location>
        <position position="432"/>
    </location>
    <ligand>
        <name>Zn(2+)</name>
        <dbReference type="ChEBI" id="CHEBI:29105"/>
    </ligand>
</feature>
<reference key="1">
    <citation type="submission" date="2007-03" db="EMBL/GenBank/DDBJ databases">
        <title>Complete sequence of Shewanella loihica PV-4.</title>
        <authorList>
            <consortium name="US DOE Joint Genome Institute"/>
            <person name="Copeland A."/>
            <person name="Lucas S."/>
            <person name="Lapidus A."/>
            <person name="Barry K."/>
            <person name="Detter J.C."/>
            <person name="Glavina del Rio T."/>
            <person name="Hammon N."/>
            <person name="Israni S."/>
            <person name="Dalin E."/>
            <person name="Tice H."/>
            <person name="Pitluck S."/>
            <person name="Chain P."/>
            <person name="Malfatti S."/>
            <person name="Shin M."/>
            <person name="Vergez L."/>
            <person name="Schmutz J."/>
            <person name="Larimer F."/>
            <person name="Land M."/>
            <person name="Hauser L."/>
            <person name="Kyrpides N."/>
            <person name="Mikhailova N."/>
            <person name="Romine M.F."/>
            <person name="Serres G."/>
            <person name="Fredrickson J."/>
            <person name="Tiedje J."/>
            <person name="Richardson P."/>
        </authorList>
    </citation>
    <scope>NUCLEOTIDE SEQUENCE [LARGE SCALE GENOMIC DNA]</scope>
    <source>
        <strain>ATCC BAA-1088 / PV-4</strain>
    </source>
</reference>
<keyword id="KW-0227">DNA damage</keyword>
<keyword id="KW-0234">DNA repair</keyword>
<keyword id="KW-0235">DNA replication</keyword>
<keyword id="KW-0436">Ligase</keyword>
<keyword id="KW-0460">Magnesium</keyword>
<keyword id="KW-0464">Manganese</keyword>
<keyword id="KW-0479">Metal-binding</keyword>
<keyword id="KW-0520">NAD</keyword>
<keyword id="KW-1185">Reference proteome</keyword>
<keyword id="KW-0862">Zinc</keyword>
<dbReference type="EC" id="6.5.1.2" evidence="1"/>
<dbReference type="EMBL" id="CP000606">
    <property type="protein sequence ID" value="ABO24243.1"/>
    <property type="molecule type" value="Genomic_DNA"/>
</dbReference>
<dbReference type="RefSeq" id="WP_011866174.1">
    <property type="nucleotide sequence ID" value="NC_009092.1"/>
</dbReference>
<dbReference type="SMR" id="A3QFJ5"/>
<dbReference type="STRING" id="323850.Shew_2377"/>
<dbReference type="KEGG" id="slo:Shew_2377"/>
<dbReference type="eggNOG" id="COG0272">
    <property type="taxonomic scope" value="Bacteria"/>
</dbReference>
<dbReference type="HOGENOM" id="CLU_007764_2_1_6"/>
<dbReference type="OrthoDB" id="9759736at2"/>
<dbReference type="Proteomes" id="UP000001558">
    <property type="component" value="Chromosome"/>
</dbReference>
<dbReference type="GO" id="GO:0005829">
    <property type="term" value="C:cytosol"/>
    <property type="evidence" value="ECO:0007669"/>
    <property type="project" value="TreeGrafter"/>
</dbReference>
<dbReference type="GO" id="GO:0003911">
    <property type="term" value="F:DNA ligase (NAD+) activity"/>
    <property type="evidence" value="ECO:0007669"/>
    <property type="project" value="UniProtKB-UniRule"/>
</dbReference>
<dbReference type="GO" id="GO:0046872">
    <property type="term" value="F:metal ion binding"/>
    <property type="evidence" value="ECO:0007669"/>
    <property type="project" value="UniProtKB-KW"/>
</dbReference>
<dbReference type="GO" id="GO:0006281">
    <property type="term" value="P:DNA repair"/>
    <property type="evidence" value="ECO:0007669"/>
    <property type="project" value="UniProtKB-KW"/>
</dbReference>
<dbReference type="GO" id="GO:0006260">
    <property type="term" value="P:DNA replication"/>
    <property type="evidence" value="ECO:0007669"/>
    <property type="project" value="UniProtKB-KW"/>
</dbReference>
<dbReference type="CDD" id="cd17748">
    <property type="entry name" value="BRCT_DNA_ligase_like"/>
    <property type="match status" value="1"/>
</dbReference>
<dbReference type="CDD" id="cd00114">
    <property type="entry name" value="LIGANc"/>
    <property type="match status" value="1"/>
</dbReference>
<dbReference type="FunFam" id="1.10.150.20:FF:000006">
    <property type="entry name" value="DNA ligase"/>
    <property type="match status" value="1"/>
</dbReference>
<dbReference type="FunFam" id="1.10.150.20:FF:000007">
    <property type="entry name" value="DNA ligase"/>
    <property type="match status" value="1"/>
</dbReference>
<dbReference type="FunFam" id="1.10.287.610:FF:000002">
    <property type="entry name" value="DNA ligase"/>
    <property type="match status" value="1"/>
</dbReference>
<dbReference type="FunFam" id="2.40.50.140:FF:000012">
    <property type="entry name" value="DNA ligase"/>
    <property type="match status" value="1"/>
</dbReference>
<dbReference type="FunFam" id="3.30.470.30:FF:000001">
    <property type="entry name" value="DNA ligase"/>
    <property type="match status" value="1"/>
</dbReference>
<dbReference type="FunFam" id="6.20.10.30:FF:000001">
    <property type="entry name" value="DNA ligase"/>
    <property type="match status" value="1"/>
</dbReference>
<dbReference type="Gene3D" id="6.20.10.30">
    <property type="match status" value="1"/>
</dbReference>
<dbReference type="Gene3D" id="1.10.150.20">
    <property type="entry name" value="5' to 3' exonuclease, C-terminal subdomain"/>
    <property type="match status" value="2"/>
</dbReference>
<dbReference type="Gene3D" id="3.40.50.10190">
    <property type="entry name" value="BRCT domain"/>
    <property type="match status" value="1"/>
</dbReference>
<dbReference type="Gene3D" id="3.30.470.30">
    <property type="entry name" value="DNA ligase/mRNA capping enzyme"/>
    <property type="match status" value="1"/>
</dbReference>
<dbReference type="Gene3D" id="1.10.287.610">
    <property type="entry name" value="Helix hairpin bin"/>
    <property type="match status" value="1"/>
</dbReference>
<dbReference type="Gene3D" id="2.40.50.140">
    <property type="entry name" value="Nucleic acid-binding proteins"/>
    <property type="match status" value="1"/>
</dbReference>
<dbReference type="HAMAP" id="MF_01588">
    <property type="entry name" value="DNA_ligase_A"/>
    <property type="match status" value="1"/>
</dbReference>
<dbReference type="InterPro" id="IPR001357">
    <property type="entry name" value="BRCT_dom"/>
</dbReference>
<dbReference type="InterPro" id="IPR036420">
    <property type="entry name" value="BRCT_dom_sf"/>
</dbReference>
<dbReference type="InterPro" id="IPR041663">
    <property type="entry name" value="DisA/LigA_HHH"/>
</dbReference>
<dbReference type="InterPro" id="IPR001679">
    <property type="entry name" value="DNA_ligase"/>
</dbReference>
<dbReference type="InterPro" id="IPR018239">
    <property type="entry name" value="DNA_ligase_AS"/>
</dbReference>
<dbReference type="InterPro" id="IPR033136">
    <property type="entry name" value="DNA_ligase_CS"/>
</dbReference>
<dbReference type="InterPro" id="IPR013839">
    <property type="entry name" value="DNAligase_adenylation"/>
</dbReference>
<dbReference type="InterPro" id="IPR013840">
    <property type="entry name" value="DNAligase_N"/>
</dbReference>
<dbReference type="InterPro" id="IPR012340">
    <property type="entry name" value="NA-bd_OB-fold"/>
</dbReference>
<dbReference type="InterPro" id="IPR004150">
    <property type="entry name" value="NAD_DNA_ligase_OB"/>
</dbReference>
<dbReference type="InterPro" id="IPR010994">
    <property type="entry name" value="RuvA_2-like"/>
</dbReference>
<dbReference type="InterPro" id="IPR004149">
    <property type="entry name" value="Znf_DNAligase_C4"/>
</dbReference>
<dbReference type="NCBIfam" id="TIGR00575">
    <property type="entry name" value="dnlj"/>
    <property type="match status" value="1"/>
</dbReference>
<dbReference type="NCBIfam" id="NF005932">
    <property type="entry name" value="PRK07956.1"/>
    <property type="match status" value="1"/>
</dbReference>
<dbReference type="PANTHER" id="PTHR23389">
    <property type="entry name" value="CHROMOSOME TRANSMISSION FIDELITY FACTOR 18"/>
    <property type="match status" value="1"/>
</dbReference>
<dbReference type="PANTHER" id="PTHR23389:SF9">
    <property type="entry name" value="DNA LIGASE"/>
    <property type="match status" value="1"/>
</dbReference>
<dbReference type="Pfam" id="PF00533">
    <property type="entry name" value="BRCT"/>
    <property type="match status" value="1"/>
</dbReference>
<dbReference type="Pfam" id="PF01653">
    <property type="entry name" value="DNA_ligase_aden"/>
    <property type="match status" value="1"/>
</dbReference>
<dbReference type="Pfam" id="PF03120">
    <property type="entry name" value="DNA_ligase_OB"/>
    <property type="match status" value="1"/>
</dbReference>
<dbReference type="Pfam" id="PF03119">
    <property type="entry name" value="DNA_ligase_ZBD"/>
    <property type="match status" value="1"/>
</dbReference>
<dbReference type="Pfam" id="PF12826">
    <property type="entry name" value="HHH_2"/>
    <property type="match status" value="1"/>
</dbReference>
<dbReference type="Pfam" id="PF14520">
    <property type="entry name" value="HHH_5"/>
    <property type="match status" value="1"/>
</dbReference>
<dbReference type="Pfam" id="PF22745">
    <property type="entry name" value="Nlig-Ia"/>
    <property type="match status" value="1"/>
</dbReference>
<dbReference type="PIRSF" id="PIRSF001604">
    <property type="entry name" value="LigA"/>
    <property type="match status" value="1"/>
</dbReference>
<dbReference type="SMART" id="SM00292">
    <property type="entry name" value="BRCT"/>
    <property type="match status" value="1"/>
</dbReference>
<dbReference type="SMART" id="SM00532">
    <property type="entry name" value="LIGANc"/>
    <property type="match status" value="1"/>
</dbReference>
<dbReference type="SUPFAM" id="SSF52113">
    <property type="entry name" value="BRCT domain"/>
    <property type="match status" value="1"/>
</dbReference>
<dbReference type="SUPFAM" id="SSF56091">
    <property type="entry name" value="DNA ligase/mRNA capping enzyme, catalytic domain"/>
    <property type="match status" value="1"/>
</dbReference>
<dbReference type="SUPFAM" id="SSF50249">
    <property type="entry name" value="Nucleic acid-binding proteins"/>
    <property type="match status" value="1"/>
</dbReference>
<dbReference type="SUPFAM" id="SSF47781">
    <property type="entry name" value="RuvA domain 2-like"/>
    <property type="match status" value="1"/>
</dbReference>
<dbReference type="PROSITE" id="PS50172">
    <property type="entry name" value="BRCT"/>
    <property type="match status" value="1"/>
</dbReference>
<dbReference type="PROSITE" id="PS01055">
    <property type="entry name" value="DNA_LIGASE_N1"/>
    <property type="match status" value="1"/>
</dbReference>
<dbReference type="PROSITE" id="PS01056">
    <property type="entry name" value="DNA_LIGASE_N2"/>
    <property type="match status" value="1"/>
</dbReference>
<proteinExistence type="inferred from homology"/>